<accession>P79179</accession>
<reference key="1">
    <citation type="journal article" date="1997" name="Nature">
        <title>Episodic adaptive evolution of primate lysozymes.</title>
        <authorList>
            <person name="Messier W."/>
            <person name="Stewart C.B."/>
        </authorList>
    </citation>
    <scope>NUCLEOTIDE SEQUENCE [MRNA]</scope>
    <source>
        <tissue>Blood</tissue>
    </source>
</reference>
<sequence length="148" mass="16567">MKALIVLGLVLLSVMVQGKVFERCELARTLKRLGMDGYRGISLANWMCLAKWESGYNTRATNYNAGDRSTDYGIFQINSRYWCNDGKTPGAVNACHLSCSALLQDNIADAVACAKRVVRDPQGIRAWVAWRNRCQNRDVRQYVQGCGV</sequence>
<gene>
    <name type="primary">LYZ</name>
    <name type="synonym">LZM</name>
</gene>
<proteinExistence type="evidence at transcript level"/>
<protein>
    <recommendedName>
        <fullName>Lysozyme C</fullName>
        <ecNumber>3.2.1.17</ecNumber>
    </recommendedName>
    <alternativeName>
        <fullName>1,4-beta-N-acetylmuramidase C</fullName>
    </alternativeName>
</protein>
<comment type="function">
    <text>Lysozymes have primarily a bacteriolytic function; those in tissues and body fluids are associated with the monocyte-macrophage system and enhance the activity of immunoagents.</text>
</comment>
<comment type="catalytic activity">
    <reaction>
        <text>Hydrolysis of (1-&gt;4)-beta-linkages between N-acetylmuramic acid and N-acetyl-D-glucosamine residues in a peptidoglycan and between N-acetyl-D-glucosamine residues in chitodextrins.</text>
        <dbReference type="EC" id="3.2.1.17"/>
    </reaction>
</comment>
<comment type="subunit">
    <text>Monomer.</text>
</comment>
<comment type="miscellaneous">
    <text>Lysozyme C is capable of both hydrolysis and transglycosylation; it also shows a slight esterase activity. It acts rapidly on both peptide-substituted and unsubstituted peptidoglycan, and slowly on chitin oligosaccharides.</text>
</comment>
<comment type="similarity">
    <text evidence="2">Belongs to the glycosyl hydrolase 22 family.</text>
</comment>
<name>LYSC_GORGO</name>
<dbReference type="EC" id="3.2.1.17"/>
<dbReference type="EMBL" id="U76913">
    <property type="protein sequence ID" value="AAB41205.1"/>
    <property type="molecule type" value="mRNA"/>
</dbReference>
<dbReference type="RefSeq" id="NP_001266591.1">
    <property type="nucleotide sequence ID" value="NM_001279662.1"/>
</dbReference>
<dbReference type="BMRB" id="P79179"/>
<dbReference type="SMR" id="P79179"/>
<dbReference type="FunCoup" id="P79179">
    <property type="interactions" value="92"/>
</dbReference>
<dbReference type="STRING" id="9593.ENSGGOP00000010835"/>
<dbReference type="CAZy" id="GH22">
    <property type="family name" value="Glycoside Hydrolase Family 22"/>
</dbReference>
<dbReference type="GeneID" id="101131902"/>
<dbReference type="KEGG" id="ggo:101131902"/>
<dbReference type="CTD" id="4069"/>
<dbReference type="eggNOG" id="ENOG502S1S1">
    <property type="taxonomic scope" value="Eukaryota"/>
</dbReference>
<dbReference type="InParanoid" id="P79179"/>
<dbReference type="OrthoDB" id="742at9604"/>
<dbReference type="Proteomes" id="UP000001519">
    <property type="component" value="Unplaced"/>
</dbReference>
<dbReference type="GO" id="GO:0003796">
    <property type="term" value="F:lysozyme activity"/>
    <property type="evidence" value="ECO:0000318"/>
    <property type="project" value="GO_Central"/>
</dbReference>
<dbReference type="GO" id="GO:0050829">
    <property type="term" value="P:defense response to Gram-negative bacterium"/>
    <property type="evidence" value="ECO:0000318"/>
    <property type="project" value="GO_Central"/>
</dbReference>
<dbReference type="GO" id="GO:0050830">
    <property type="term" value="P:defense response to Gram-positive bacterium"/>
    <property type="evidence" value="ECO:0000318"/>
    <property type="project" value="GO_Central"/>
</dbReference>
<dbReference type="GO" id="GO:0031640">
    <property type="term" value="P:killing of cells of another organism"/>
    <property type="evidence" value="ECO:0007669"/>
    <property type="project" value="UniProtKB-KW"/>
</dbReference>
<dbReference type="CDD" id="cd16897">
    <property type="entry name" value="LYZ_C"/>
    <property type="match status" value="1"/>
</dbReference>
<dbReference type="FunFam" id="1.10.530.10:FF:000001">
    <property type="entry name" value="Lysozyme C"/>
    <property type="match status" value="1"/>
</dbReference>
<dbReference type="Gene3D" id="1.10.530.10">
    <property type="match status" value="1"/>
</dbReference>
<dbReference type="InterPro" id="IPR001916">
    <property type="entry name" value="Glyco_hydro_22"/>
</dbReference>
<dbReference type="InterPro" id="IPR019799">
    <property type="entry name" value="Glyco_hydro_22_CS"/>
</dbReference>
<dbReference type="InterPro" id="IPR000974">
    <property type="entry name" value="Glyco_hydro_22_lys"/>
</dbReference>
<dbReference type="InterPro" id="IPR023346">
    <property type="entry name" value="Lysozyme-like_dom_sf"/>
</dbReference>
<dbReference type="PANTHER" id="PTHR11407">
    <property type="entry name" value="LYSOZYME C"/>
    <property type="match status" value="1"/>
</dbReference>
<dbReference type="PANTHER" id="PTHR11407:SF28">
    <property type="entry name" value="LYSOZYME C"/>
    <property type="match status" value="1"/>
</dbReference>
<dbReference type="Pfam" id="PF00062">
    <property type="entry name" value="Lys"/>
    <property type="match status" value="1"/>
</dbReference>
<dbReference type="PRINTS" id="PR00137">
    <property type="entry name" value="LYSOZYME"/>
</dbReference>
<dbReference type="PRINTS" id="PR00135">
    <property type="entry name" value="LYZLACT"/>
</dbReference>
<dbReference type="SMART" id="SM00263">
    <property type="entry name" value="LYZ1"/>
    <property type="match status" value="1"/>
</dbReference>
<dbReference type="SUPFAM" id="SSF53955">
    <property type="entry name" value="Lysozyme-like"/>
    <property type="match status" value="1"/>
</dbReference>
<dbReference type="PROSITE" id="PS00128">
    <property type="entry name" value="GLYCOSYL_HYDROL_F22_1"/>
    <property type="match status" value="1"/>
</dbReference>
<dbReference type="PROSITE" id="PS51348">
    <property type="entry name" value="GLYCOSYL_HYDROL_F22_2"/>
    <property type="match status" value="1"/>
</dbReference>
<organism>
    <name type="scientific">Gorilla gorilla gorilla</name>
    <name type="common">Western lowland gorilla</name>
    <dbReference type="NCBI Taxonomy" id="9595"/>
    <lineage>
        <taxon>Eukaryota</taxon>
        <taxon>Metazoa</taxon>
        <taxon>Chordata</taxon>
        <taxon>Craniata</taxon>
        <taxon>Vertebrata</taxon>
        <taxon>Euteleostomi</taxon>
        <taxon>Mammalia</taxon>
        <taxon>Eutheria</taxon>
        <taxon>Euarchontoglires</taxon>
        <taxon>Primates</taxon>
        <taxon>Haplorrhini</taxon>
        <taxon>Catarrhini</taxon>
        <taxon>Hominidae</taxon>
        <taxon>Gorilla</taxon>
    </lineage>
</organism>
<feature type="signal peptide" evidence="1">
    <location>
        <begin position="1"/>
        <end position="18"/>
    </location>
</feature>
<feature type="chain" id="PRO_0000018465" description="Lysozyme C">
    <location>
        <begin position="19"/>
        <end position="148"/>
    </location>
</feature>
<feature type="domain" description="C-type lysozyme" evidence="2">
    <location>
        <begin position="19"/>
        <end position="148"/>
    </location>
</feature>
<feature type="active site" evidence="2">
    <location>
        <position position="53"/>
    </location>
</feature>
<feature type="active site" evidence="2">
    <location>
        <position position="71"/>
    </location>
</feature>
<feature type="disulfide bond" evidence="2">
    <location>
        <begin position="24"/>
        <end position="146"/>
    </location>
</feature>
<feature type="disulfide bond" evidence="2">
    <location>
        <begin position="48"/>
        <end position="134"/>
    </location>
</feature>
<feature type="disulfide bond" evidence="2">
    <location>
        <begin position="83"/>
        <end position="99"/>
    </location>
</feature>
<feature type="disulfide bond" evidence="2">
    <location>
        <begin position="95"/>
        <end position="113"/>
    </location>
</feature>
<evidence type="ECO:0000250" key="1"/>
<evidence type="ECO:0000255" key="2">
    <source>
        <dbReference type="PROSITE-ProRule" id="PRU00680"/>
    </source>
</evidence>
<keyword id="KW-0929">Antimicrobial</keyword>
<keyword id="KW-0081">Bacteriolytic enzyme</keyword>
<keyword id="KW-1015">Disulfide bond</keyword>
<keyword id="KW-0326">Glycosidase</keyword>
<keyword id="KW-0378">Hydrolase</keyword>
<keyword id="KW-1185">Reference proteome</keyword>
<keyword id="KW-0732">Signal</keyword>